<protein>
    <recommendedName>
        <fullName evidence="1">Sec-independent protein translocase protein TatA</fullName>
    </recommendedName>
</protein>
<comment type="function">
    <text evidence="1">Part of the twin-arginine translocation (Tat) system that transports large folded proteins containing a characteristic twin-arginine motif in their signal peptide across membranes. TatA could form the protein-conducting channel of the Tat system.</text>
</comment>
<comment type="subunit">
    <text evidence="1">The Tat system comprises two distinct complexes: a TatABC complex, containing multiple copies of TatA, TatB and TatC subunits, and a separate TatA complex, containing only TatA subunits. Substrates initially bind to the TatABC complex, which probably triggers association of the separate TatA complex to form the active translocon.</text>
</comment>
<comment type="subcellular location">
    <subcellularLocation>
        <location evidence="1">Cell membrane</location>
        <topology evidence="1">Single-pass membrane protein</topology>
    </subcellularLocation>
</comment>
<comment type="similarity">
    <text evidence="1">Belongs to the TatA/E family.</text>
</comment>
<evidence type="ECO:0000255" key="1">
    <source>
        <dbReference type="HAMAP-Rule" id="MF_00236"/>
    </source>
</evidence>
<accession>A4QI94</accession>
<keyword id="KW-1003">Cell membrane</keyword>
<keyword id="KW-0472">Membrane</keyword>
<keyword id="KW-0653">Protein transport</keyword>
<keyword id="KW-0811">Translocation</keyword>
<keyword id="KW-0812">Transmembrane</keyword>
<keyword id="KW-1133">Transmembrane helix</keyword>
<keyword id="KW-0813">Transport</keyword>
<gene>
    <name evidence="1" type="primary">tatA</name>
    <name type="ordered locus">cgR_2938</name>
</gene>
<feature type="chain" id="PRO_0000336627" description="Sec-independent protein translocase protein TatA">
    <location>
        <begin position="1"/>
        <end position="60"/>
    </location>
</feature>
<feature type="transmembrane region" description="Helical" evidence="1">
    <location>
        <begin position="1"/>
        <end position="21"/>
    </location>
</feature>
<dbReference type="EMBL" id="AP009044">
    <property type="protein sequence ID" value="BAF55960.1"/>
    <property type="molecule type" value="Genomic_DNA"/>
</dbReference>
<dbReference type="RefSeq" id="WP_003855212.1">
    <property type="nucleotide sequence ID" value="NC_009342.1"/>
</dbReference>
<dbReference type="SMR" id="A4QI94"/>
<dbReference type="GeneID" id="1020996"/>
<dbReference type="KEGG" id="cgt:cgR_2938"/>
<dbReference type="HOGENOM" id="CLU_086034_6_3_11"/>
<dbReference type="PhylomeDB" id="A4QI94"/>
<dbReference type="Proteomes" id="UP000006698">
    <property type="component" value="Chromosome"/>
</dbReference>
<dbReference type="GO" id="GO:0033281">
    <property type="term" value="C:TAT protein transport complex"/>
    <property type="evidence" value="ECO:0007669"/>
    <property type="project" value="UniProtKB-UniRule"/>
</dbReference>
<dbReference type="GO" id="GO:0008320">
    <property type="term" value="F:protein transmembrane transporter activity"/>
    <property type="evidence" value="ECO:0007669"/>
    <property type="project" value="UniProtKB-UniRule"/>
</dbReference>
<dbReference type="GO" id="GO:0043953">
    <property type="term" value="P:protein transport by the Tat complex"/>
    <property type="evidence" value="ECO:0007669"/>
    <property type="project" value="UniProtKB-UniRule"/>
</dbReference>
<dbReference type="Gene3D" id="1.20.5.3310">
    <property type="match status" value="1"/>
</dbReference>
<dbReference type="HAMAP" id="MF_00236">
    <property type="entry name" value="TatA_E"/>
    <property type="match status" value="1"/>
</dbReference>
<dbReference type="InterPro" id="IPR003369">
    <property type="entry name" value="TatA/B/E"/>
</dbReference>
<dbReference type="InterPro" id="IPR006312">
    <property type="entry name" value="TatA/E"/>
</dbReference>
<dbReference type="NCBIfam" id="NF001854">
    <property type="entry name" value="PRK00575.1"/>
    <property type="match status" value="1"/>
</dbReference>
<dbReference type="NCBIfam" id="TIGR01411">
    <property type="entry name" value="tatAE"/>
    <property type="match status" value="1"/>
</dbReference>
<dbReference type="PANTHER" id="PTHR42982">
    <property type="entry name" value="SEC-INDEPENDENT PROTEIN TRANSLOCASE PROTEIN TATA"/>
    <property type="match status" value="1"/>
</dbReference>
<dbReference type="PANTHER" id="PTHR42982:SF8">
    <property type="entry name" value="SEC-INDEPENDENT PROTEIN TRANSLOCASE PROTEIN TATA"/>
    <property type="match status" value="1"/>
</dbReference>
<dbReference type="Pfam" id="PF02416">
    <property type="entry name" value="TatA_B_E"/>
    <property type="match status" value="1"/>
</dbReference>
<organism>
    <name type="scientific">Corynebacterium glutamicum (strain R)</name>
    <dbReference type="NCBI Taxonomy" id="340322"/>
    <lineage>
        <taxon>Bacteria</taxon>
        <taxon>Bacillati</taxon>
        <taxon>Actinomycetota</taxon>
        <taxon>Actinomycetes</taxon>
        <taxon>Mycobacteriales</taxon>
        <taxon>Corynebacteriaceae</taxon>
        <taxon>Corynebacterium</taxon>
    </lineage>
</organism>
<sequence length="60" mass="6586">MTPAGPAQLLIVALVVIVLFGSNKLPDVARSVGRSMRIFKSEIKEMNKDQIESSDQTLKN</sequence>
<proteinExistence type="inferred from homology"/>
<reference key="1">
    <citation type="journal article" date="2007" name="Microbiology">
        <title>Comparative analysis of the Corynebacterium glutamicum group and complete genome sequence of strain R.</title>
        <authorList>
            <person name="Yukawa H."/>
            <person name="Omumasaba C.A."/>
            <person name="Nonaka H."/>
            <person name="Kos P."/>
            <person name="Okai N."/>
            <person name="Suzuki N."/>
            <person name="Suda M."/>
            <person name="Tsuge Y."/>
            <person name="Watanabe J."/>
            <person name="Ikeda Y."/>
            <person name="Vertes A.A."/>
            <person name="Inui M."/>
        </authorList>
    </citation>
    <scope>NUCLEOTIDE SEQUENCE [LARGE SCALE GENOMIC DNA]</scope>
    <source>
        <strain>R</strain>
    </source>
</reference>
<name>TATA_CORGB</name>